<comment type="function">
    <text evidence="1">Involved in DNA repair and RecF pathway recombination.</text>
</comment>
<comment type="subunit">
    <text evidence="1">Monomer.</text>
</comment>
<comment type="similarity">
    <text evidence="1">Belongs to the RecO family.</text>
</comment>
<proteinExistence type="inferred from homology"/>
<accession>B2TXX8</accession>
<name>RECO_SHIB3</name>
<sequence length="242" mass="27389">MEGWQRAFVLHSRPWSETSLMLDVFTEESGRVRLVAKGARSKRSTLKGALQPFTPLLLRFGGRGEVKTLRSAEAVSLALPLSGITLYSGLYINELLSRVLEYETRFSELFFDYLHCIQSLAGATGTPEPALRRFELALLGHLGYGVNFTYCAGSGEPVDDTMTYRYREEKGFIASVVIDNKTFTGRQLKALNAREFPDADTLRAAKRFTRMALKPYLGGKPLKSRELFRQFMPKRTVKTHYE</sequence>
<gene>
    <name evidence="1" type="primary">recO</name>
    <name type="ordered locus">SbBS512_E2930</name>
</gene>
<dbReference type="EMBL" id="CP001063">
    <property type="protein sequence ID" value="ACD09557.1"/>
    <property type="molecule type" value="Genomic_DNA"/>
</dbReference>
<dbReference type="RefSeq" id="WP_000399399.1">
    <property type="nucleotide sequence ID" value="NC_010658.1"/>
</dbReference>
<dbReference type="SMR" id="B2TXX8"/>
<dbReference type="STRING" id="344609.SbBS512_E2930"/>
<dbReference type="KEGG" id="sbc:SbBS512_E2930"/>
<dbReference type="HOGENOM" id="CLU_066645_1_0_6"/>
<dbReference type="Proteomes" id="UP000001030">
    <property type="component" value="Chromosome"/>
</dbReference>
<dbReference type="GO" id="GO:0043590">
    <property type="term" value="C:bacterial nucleoid"/>
    <property type="evidence" value="ECO:0007669"/>
    <property type="project" value="TreeGrafter"/>
</dbReference>
<dbReference type="GO" id="GO:0006310">
    <property type="term" value="P:DNA recombination"/>
    <property type="evidence" value="ECO:0007669"/>
    <property type="project" value="UniProtKB-UniRule"/>
</dbReference>
<dbReference type="GO" id="GO:0006302">
    <property type="term" value="P:double-strand break repair"/>
    <property type="evidence" value="ECO:0007669"/>
    <property type="project" value="TreeGrafter"/>
</dbReference>
<dbReference type="FunFam" id="1.20.1440.120:FF:000001">
    <property type="entry name" value="DNA repair protein RecO"/>
    <property type="match status" value="1"/>
</dbReference>
<dbReference type="FunFam" id="2.40.50.140:FF:000074">
    <property type="entry name" value="DNA repair protein RecO"/>
    <property type="match status" value="1"/>
</dbReference>
<dbReference type="Gene3D" id="2.40.50.140">
    <property type="entry name" value="Nucleic acid-binding proteins"/>
    <property type="match status" value="1"/>
</dbReference>
<dbReference type="Gene3D" id="1.20.1440.120">
    <property type="entry name" value="Recombination protein O, C-terminal domain"/>
    <property type="match status" value="1"/>
</dbReference>
<dbReference type="HAMAP" id="MF_00201">
    <property type="entry name" value="RecO"/>
    <property type="match status" value="1"/>
</dbReference>
<dbReference type="InterPro" id="IPR037278">
    <property type="entry name" value="ARFGAP/RecO"/>
</dbReference>
<dbReference type="InterPro" id="IPR022572">
    <property type="entry name" value="DNA_rep/recomb_RecO_N"/>
</dbReference>
<dbReference type="InterPro" id="IPR012340">
    <property type="entry name" value="NA-bd_OB-fold"/>
</dbReference>
<dbReference type="InterPro" id="IPR003717">
    <property type="entry name" value="RecO"/>
</dbReference>
<dbReference type="InterPro" id="IPR042242">
    <property type="entry name" value="RecO_C"/>
</dbReference>
<dbReference type="NCBIfam" id="TIGR00613">
    <property type="entry name" value="reco"/>
    <property type="match status" value="1"/>
</dbReference>
<dbReference type="PANTHER" id="PTHR33991">
    <property type="entry name" value="DNA REPAIR PROTEIN RECO"/>
    <property type="match status" value="1"/>
</dbReference>
<dbReference type="PANTHER" id="PTHR33991:SF1">
    <property type="entry name" value="DNA REPAIR PROTEIN RECO"/>
    <property type="match status" value="1"/>
</dbReference>
<dbReference type="Pfam" id="PF02565">
    <property type="entry name" value="RecO_C"/>
    <property type="match status" value="1"/>
</dbReference>
<dbReference type="Pfam" id="PF11967">
    <property type="entry name" value="RecO_N"/>
    <property type="match status" value="1"/>
</dbReference>
<dbReference type="SUPFAM" id="SSF57863">
    <property type="entry name" value="ArfGap/RecO-like zinc finger"/>
    <property type="match status" value="1"/>
</dbReference>
<dbReference type="SUPFAM" id="SSF50249">
    <property type="entry name" value="Nucleic acid-binding proteins"/>
    <property type="match status" value="1"/>
</dbReference>
<keyword id="KW-0227">DNA damage</keyword>
<keyword id="KW-0233">DNA recombination</keyword>
<keyword id="KW-0234">DNA repair</keyword>
<keyword id="KW-1185">Reference proteome</keyword>
<feature type="chain" id="PRO_1000099412" description="DNA repair protein RecO">
    <location>
        <begin position="1"/>
        <end position="242"/>
    </location>
</feature>
<organism>
    <name type="scientific">Shigella boydii serotype 18 (strain CDC 3083-94 / BS512)</name>
    <dbReference type="NCBI Taxonomy" id="344609"/>
    <lineage>
        <taxon>Bacteria</taxon>
        <taxon>Pseudomonadati</taxon>
        <taxon>Pseudomonadota</taxon>
        <taxon>Gammaproteobacteria</taxon>
        <taxon>Enterobacterales</taxon>
        <taxon>Enterobacteriaceae</taxon>
        <taxon>Shigella</taxon>
    </lineage>
</organism>
<reference key="1">
    <citation type="submission" date="2008-05" db="EMBL/GenBank/DDBJ databases">
        <title>Complete sequence of Shigella boydii serotype 18 strain BS512.</title>
        <authorList>
            <person name="Rasko D.A."/>
            <person name="Rosovitz M."/>
            <person name="Maurelli A.T."/>
            <person name="Myers G."/>
            <person name="Seshadri R."/>
            <person name="Cer R."/>
            <person name="Jiang L."/>
            <person name="Ravel J."/>
            <person name="Sebastian Y."/>
        </authorList>
    </citation>
    <scope>NUCLEOTIDE SEQUENCE [LARGE SCALE GENOMIC DNA]</scope>
    <source>
        <strain>CDC 3083-94 / BS512</strain>
    </source>
</reference>
<evidence type="ECO:0000255" key="1">
    <source>
        <dbReference type="HAMAP-Rule" id="MF_00201"/>
    </source>
</evidence>
<protein>
    <recommendedName>
        <fullName evidence="1">DNA repair protein RecO</fullName>
    </recommendedName>
    <alternativeName>
        <fullName evidence="1">Recombination protein O</fullName>
    </alternativeName>
</protein>